<protein>
    <recommendedName>
        <fullName>Glucan endo-1,3-beta-glucosidase GV</fullName>
        <ecNumber>3.2.1.39</ecNumber>
    </recommendedName>
    <alternativeName>
        <fullName>(1-&gt;3)-beta-glucan endohydrolase GV</fullName>
    </alternativeName>
    <alternativeName>
        <fullName>(1-&gt;3)-beta-glucanase isoenzyme GV</fullName>
    </alternativeName>
    <alternativeName>
        <fullName>Beta-1,3-endoglucanase GV</fullName>
    </alternativeName>
</protein>
<dbReference type="EC" id="3.2.1.39"/>
<dbReference type="EMBL" id="M96939">
    <property type="protein sequence ID" value="AAA21564.1"/>
    <property type="molecule type" value="mRNA"/>
</dbReference>
<dbReference type="PIR" id="S46237">
    <property type="entry name" value="S46237"/>
</dbReference>
<dbReference type="SMR" id="Q02438"/>
<dbReference type="CAZy" id="GH17">
    <property type="family name" value="Glycoside Hydrolase Family 17"/>
</dbReference>
<dbReference type="ExpressionAtlas" id="Q02438">
    <property type="expression patterns" value="baseline and differential"/>
</dbReference>
<dbReference type="GO" id="GO:0005737">
    <property type="term" value="C:cytoplasm"/>
    <property type="evidence" value="ECO:0007669"/>
    <property type="project" value="UniProtKB-SubCell"/>
</dbReference>
<dbReference type="GO" id="GO:0042973">
    <property type="term" value="F:glucan endo-1,3-beta-D-glucosidase activity"/>
    <property type="evidence" value="ECO:0007669"/>
    <property type="project" value="UniProtKB-EC"/>
</dbReference>
<dbReference type="GO" id="GO:0005975">
    <property type="term" value="P:carbohydrate metabolic process"/>
    <property type="evidence" value="ECO:0007669"/>
    <property type="project" value="InterPro"/>
</dbReference>
<dbReference type="GO" id="GO:0006952">
    <property type="term" value="P:defense response"/>
    <property type="evidence" value="ECO:0007669"/>
    <property type="project" value="UniProtKB-KW"/>
</dbReference>
<dbReference type="FunFam" id="3.20.20.80:FF:000010">
    <property type="entry name" value="glucan endo-1,3-beta-glucosidase, basic"/>
    <property type="match status" value="1"/>
</dbReference>
<dbReference type="Gene3D" id="3.20.20.80">
    <property type="entry name" value="Glycosidases"/>
    <property type="match status" value="1"/>
</dbReference>
<dbReference type="InterPro" id="IPR000490">
    <property type="entry name" value="Glyco_hydro_17"/>
</dbReference>
<dbReference type="InterPro" id="IPR044965">
    <property type="entry name" value="Glyco_hydro_17_plant"/>
</dbReference>
<dbReference type="InterPro" id="IPR017853">
    <property type="entry name" value="Glycoside_hydrolase_SF"/>
</dbReference>
<dbReference type="PANTHER" id="PTHR32227">
    <property type="entry name" value="GLUCAN ENDO-1,3-BETA-GLUCOSIDASE BG1-RELATED-RELATED"/>
    <property type="match status" value="1"/>
</dbReference>
<dbReference type="Pfam" id="PF00332">
    <property type="entry name" value="Glyco_hydro_17"/>
    <property type="match status" value="1"/>
</dbReference>
<dbReference type="SUPFAM" id="SSF51445">
    <property type="entry name" value="(Trans)glycosidases"/>
    <property type="match status" value="1"/>
</dbReference>
<dbReference type="PROSITE" id="PS00587">
    <property type="entry name" value="GLYCOSYL_HYDROL_F17"/>
    <property type="match status" value="1"/>
</dbReference>
<name>E13E_HORVU</name>
<reference key="1">
    <citation type="journal article" date="1994" name="FEBS Lett.">
        <title>Heterologous expression of cDNAs encoding barley (Hordeum vulgare) (1--&gt;3)-beta-glucanase isoenzyme GV.</title>
        <authorList>
            <person name="Xu P."/>
            <person name="Harvey A.J."/>
            <person name="Fincher G.B."/>
        </authorList>
    </citation>
    <scope>NUCLEOTIDE SEQUENCE [MRNA]</scope>
    <source>
        <strain>cv. Clipper</strain>
        <tissue>Leaf</tissue>
        <tissue>Root</tissue>
    </source>
</reference>
<reference key="2">
    <citation type="journal article" date="1992" name="Gene">
        <title>Evolution and differential expression of the (1--&gt;3)-beta-glucan endohydrolase-encoding gene family in barley, Hordeum vulgare.</title>
        <authorList>
            <person name="Xu P."/>
            <person name="Wang J."/>
            <person name="Fincher G.B."/>
        </authorList>
    </citation>
    <scope>NUCLEOTIDE SEQUENCE [MRNA] OF 5-316</scope>
    <source>
        <strain>cv. Clipper</strain>
        <tissue>Leaf</tissue>
        <tissue>Root</tissue>
    </source>
</reference>
<keyword id="KW-0963">Cytoplasm</keyword>
<keyword id="KW-0326">Glycosidase</keyword>
<keyword id="KW-0378">Hydrolase</keyword>
<keyword id="KW-0611">Plant defense</keyword>
<accession>Q02438</accession>
<sequence>MGAVHGVCYGMVGDNLPSRSDVVQLYKSRNIHAMRIYNPDQEALTALRGSGIFLILDVGGVDEVRRLGRDPSYAAGWVRSNVQAYYPDVLIRYIAVGNEVPAGDTGIILLAMQNVHNALASANLSSSIKVSTAVRFDVITNSFPPSSGVFRDPSGLVPIARFLDSTGAPFLANVYPYFAYRDDRGQNIRLNYATLQPGTTVRDNGNGLTYTSLFDAMVDSIYAALEKAGTPNVRVVVSESGWPSAGGFGASVENARNYNQGLIDHIRSGTPKRPGAIETYIFAMFNENRKPGDEVERNFGLFFPNKQPVYPTTFPN</sequence>
<feature type="chain" id="PRO_0000205275" description="Glucan endo-1,3-beta-glucosidase GV">
    <location>
        <begin position="1"/>
        <end position="316"/>
    </location>
</feature>
<feature type="active site" description="Proton donor" evidence="1">
    <location>
        <position position="99"/>
    </location>
</feature>
<feature type="active site" description="Nucleophile" evidence="1">
    <location>
        <position position="239"/>
    </location>
</feature>
<organism>
    <name type="scientific">Hordeum vulgare</name>
    <name type="common">Barley</name>
    <dbReference type="NCBI Taxonomy" id="4513"/>
    <lineage>
        <taxon>Eukaryota</taxon>
        <taxon>Viridiplantae</taxon>
        <taxon>Streptophyta</taxon>
        <taxon>Embryophyta</taxon>
        <taxon>Tracheophyta</taxon>
        <taxon>Spermatophyta</taxon>
        <taxon>Magnoliopsida</taxon>
        <taxon>Liliopsida</taxon>
        <taxon>Poales</taxon>
        <taxon>Poaceae</taxon>
        <taxon>BOP clade</taxon>
        <taxon>Pooideae</taxon>
        <taxon>Triticodae</taxon>
        <taxon>Triticeae</taxon>
        <taxon>Hordeinae</taxon>
        <taxon>Hordeum</taxon>
    </lineage>
</organism>
<evidence type="ECO:0000250" key="1">
    <source>
        <dbReference type="UniProtKB" id="O22317"/>
    </source>
</evidence>
<evidence type="ECO:0000305" key="2"/>
<comment type="function">
    <text>May provide a degree of protection against microbial invasion of germinated barley grain through its ability to degrade fungal cell wall polysaccharides.</text>
</comment>
<comment type="catalytic activity">
    <reaction>
        <text>Hydrolysis of (1-&gt;3)-beta-D-glucosidic linkages in (1-&gt;3)-beta-D-glucans.</text>
        <dbReference type="EC" id="3.2.1.39"/>
    </reaction>
</comment>
<comment type="subcellular location">
    <subcellularLocation>
        <location evidence="2">Cytoplasm</location>
    </subcellularLocation>
</comment>
<comment type="similarity">
    <text evidence="2">Belongs to the glycosyl hydrolase 17 family.</text>
</comment>
<proteinExistence type="evidence at transcript level"/>